<reference key="1">
    <citation type="submission" date="2008-04" db="EMBL/GenBank/DDBJ databases">
        <title>Complete sequence of Yersinia pseudotuberculosis PB1/+.</title>
        <authorList>
            <person name="Copeland A."/>
            <person name="Lucas S."/>
            <person name="Lapidus A."/>
            <person name="Glavina del Rio T."/>
            <person name="Dalin E."/>
            <person name="Tice H."/>
            <person name="Bruce D."/>
            <person name="Goodwin L."/>
            <person name="Pitluck S."/>
            <person name="Munk A.C."/>
            <person name="Brettin T."/>
            <person name="Detter J.C."/>
            <person name="Han C."/>
            <person name="Tapia R."/>
            <person name="Schmutz J."/>
            <person name="Larimer F."/>
            <person name="Land M."/>
            <person name="Hauser L."/>
            <person name="Challacombe J.F."/>
            <person name="Green L."/>
            <person name="Lindler L.E."/>
            <person name="Nikolich M.P."/>
            <person name="Richardson P."/>
        </authorList>
    </citation>
    <scope>NUCLEOTIDE SEQUENCE [LARGE SCALE GENOMIC DNA]</scope>
    <source>
        <strain>PB1/+</strain>
    </source>
</reference>
<dbReference type="EMBL" id="CP001048">
    <property type="protein sequence ID" value="ACC89854.1"/>
    <property type="molecule type" value="Genomic_DNA"/>
</dbReference>
<dbReference type="RefSeq" id="WP_002228401.1">
    <property type="nucleotide sequence ID" value="NZ_CP009780.1"/>
</dbReference>
<dbReference type="SMR" id="B2K9J7"/>
<dbReference type="GeneID" id="96666285"/>
<dbReference type="KEGG" id="ypb:YPTS_2897"/>
<dbReference type="PATRIC" id="fig|502801.10.peg.2326"/>
<dbReference type="GO" id="GO:0006270">
    <property type="term" value="P:DNA replication initiation"/>
    <property type="evidence" value="ECO:0007669"/>
    <property type="project" value="TreeGrafter"/>
</dbReference>
<dbReference type="GO" id="GO:0032297">
    <property type="term" value="P:negative regulation of DNA-templated DNA replication initiation"/>
    <property type="evidence" value="ECO:0007669"/>
    <property type="project" value="InterPro"/>
</dbReference>
<dbReference type="FunFam" id="1.10.8.60:FF:000024">
    <property type="entry name" value="DnaA regulatory inactivator Hda"/>
    <property type="match status" value="1"/>
</dbReference>
<dbReference type="FunFam" id="3.40.50.300:FF:000452">
    <property type="entry name" value="DnaA regulatory inactivator Hda"/>
    <property type="match status" value="1"/>
</dbReference>
<dbReference type="Gene3D" id="1.10.8.60">
    <property type="match status" value="1"/>
</dbReference>
<dbReference type="Gene3D" id="3.40.50.300">
    <property type="entry name" value="P-loop containing nucleotide triphosphate hydrolases"/>
    <property type="match status" value="1"/>
</dbReference>
<dbReference type="HAMAP" id="MF_01158">
    <property type="entry name" value="Hda"/>
    <property type="match status" value="1"/>
</dbReference>
<dbReference type="InterPro" id="IPR020591">
    <property type="entry name" value="Chromosome_initiator_DnaA-like"/>
</dbReference>
<dbReference type="InterPro" id="IPR013317">
    <property type="entry name" value="DnaA_dom"/>
</dbReference>
<dbReference type="InterPro" id="IPR017788">
    <property type="entry name" value="Hda"/>
</dbReference>
<dbReference type="InterPro" id="IPR022864">
    <property type="entry name" value="Hda_Enterobact"/>
</dbReference>
<dbReference type="InterPro" id="IPR055199">
    <property type="entry name" value="Hda_lid"/>
</dbReference>
<dbReference type="InterPro" id="IPR027417">
    <property type="entry name" value="P-loop_NTPase"/>
</dbReference>
<dbReference type="NCBIfam" id="TIGR03420">
    <property type="entry name" value="DnaA_homol_Hda"/>
    <property type="match status" value="1"/>
</dbReference>
<dbReference type="NCBIfam" id="NF005982">
    <property type="entry name" value="PRK08084.1"/>
    <property type="match status" value="1"/>
</dbReference>
<dbReference type="PANTHER" id="PTHR30050">
    <property type="entry name" value="CHROMOSOMAL REPLICATION INITIATOR PROTEIN DNAA"/>
    <property type="match status" value="1"/>
</dbReference>
<dbReference type="PANTHER" id="PTHR30050:SF5">
    <property type="entry name" value="DNAA REGULATORY INACTIVATOR HDA"/>
    <property type="match status" value="1"/>
</dbReference>
<dbReference type="Pfam" id="PF00308">
    <property type="entry name" value="Bac_DnaA"/>
    <property type="match status" value="1"/>
</dbReference>
<dbReference type="Pfam" id="PF22688">
    <property type="entry name" value="Hda_lid"/>
    <property type="match status" value="1"/>
</dbReference>
<dbReference type="PRINTS" id="PR00051">
    <property type="entry name" value="DNAA"/>
</dbReference>
<dbReference type="SUPFAM" id="SSF52540">
    <property type="entry name" value="P-loop containing nucleoside triphosphate hydrolases"/>
    <property type="match status" value="1"/>
</dbReference>
<comment type="function">
    <text evidence="1">Mediates the interaction of DNA replication initiator protein DnaA with DNA polymerase subunit beta sliding clamp (dnaN). Stimulates hydrolysis of ATP-DnaA to ADP-DnaA, rendering DnaA inactive for reinitiation, a process called regulatory inhibition of DnaA or RIDA (By similarity).</text>
</comment>
<comment type="subunit">
    <text evidence="2">The active form seems to be an ADP-bound monomer. Forms the RIDA complex (regulatory inactivation of DnaA) of ATP-DnaA, ADP-Hda and the DNA-loaded beta sliding clamp (dnaN).</text>
</comment>
<comment type="similarity">
    <text evidence="2">Belongs to the DnaA family. HdA subfamily.</text>
</comment>
<protein>
    <recommendedName>
        <fullName evidence="2">DnaA regulatory inactivator Hda</fullName>
    </recommendedName>
</protein>
<name>HDA_YERPB</name>
<proteinExistence type="inferred from homology"/>
<accession>B2K9J7</accession>
<sequence length="235" mass="26703">MLLNTPAQLSLPLYLPDDETFASFYPGENPSLLAAIQSAVHQPHGSYIYFWSREGGGRSHLLHAACAELSQQGEAVGYVPLDKRAYFIPEVLEGMEQLALVCIDNIECIAGDEQWEMAMFNLYNRIVETGRTRLLITGDRPPRQLNLGLPDLASRLDWGQIYKLQPLSDDEKLQALQLRAKLRGFELPEDVGRFLLKRLDREMRTLFMTLDQLDRASITAQRKLTIPFVKEILSL</sequence>
<evidence type="ECO:0000250" key="1"/>
<evidence type="ECO:0000255" key="2">
    <source>
        <dbReference type="HAMAP-Rule" id="MF_01158"/>
    </source>
</evidence>
<organism>
    <name type="scientific">Yersinia pseudotuberculosis serotype IB (strain PB1/+)</name>
    <dbReference type="NCBI Taxonomy" id="502801"/>
    <lineage>
        <taxon>Bacteria</taxon>
        <taxon>Pseudomonadati</taxon>
        <taxon>Pseudomonadota</taxon>
        <taxon>Gammaproteobacteria</taxon>
        <taxon>Enterobacterales</taxon>
        <taxon>Yersiniaceae</taxon>
        <taxon>Yersinia</taxon>
    </lineage>
</organism>
<keyword id="KW-0235">DNA replication</keyword>
<keyword id="KW-0236">DNA replication inhibitor</keyword>
<gene>
    <name evidence="2" type="primary">hda</name>
    <name type="ordered locus">YPTS_2897</name>
</gene>
<feature type="chain" id="PRO_1000137825" description="DnaA regulatory inactivator Hda">
    <location>
        <begin position="1"/>
        <end position="235"/>
    </location>
</feature>